<keyword id="KW-0472">Membrane</keyword>
<keyword id="KW-0496">Mitochondrion</keyword>
<keyword id="KW-1185">Reference proteome</keyword>
<keyword id="KW-0809">Transit peptide</keyword>
<keyword id="KW-0812">Transmembrane</keyword>
<keyword id="KW-1133">Transmembrane helix</keyword>
<name>GEP7_CLAL4</name>
<dbReference type="EMBL" id="CH408076">
    <property type="protein sequence ID" value="EEQ35961.1"/>
    <property type="molecule type" value="Genomic_DNA"/>
</dbReference>
<dbReference type="RefSeq" id="XP_002618925.1">
    <property type="nucleotide sequence ID" value="XM_002618879.1"/>
</dbReference>
<dbReference type="SMR" id="C4XVW1"/>
<dbReference type="FunCoup" id="C4XVW1">
    <property type="interactions" value="14"/>
</dbReference>
<dbReference type="GeneID" id="8500201"/>
<dbReference type="KEGG" id="clu:CLUG_00084"/>
<dbReference type="VEuPathDB" id="FungiDB:CLUG_00084"/>
<dbReference type="HOGENOM" id="CLU_080217_0_0_1"/>
<dbReference type="InParanoid" id="C4XVW1"/>
<dbReference type="OMA" id="PYDLPFR"/>
<dbReference type="OrthoDB" id="67752at4891"/>
<dbReference type="Proteomes" id="UP000007703">
    <property type="component" value="Unassembled WGS sequence"/>
</dbReference>
<dbReference type="GO" id="GO:0031966">
    <property type="term" value="C:mitochondrial membrane"/>
    <property type="evidence" value="ECO:0007669"/>
    <property type="project" value="UniProtKB-SubCell"/>
</dbReference>
<dbReference type="GO" id="GO:0045277">
    <property type="term" value="C:respiratory chain complex IV"/>
    <property type="evidence" value="ECO:0007669"/>
    <property type="project" value="InterPro"/>
</dbReference>
<dbReference type="GO" id="GO:0006123">
    <property type="term" value="P:mitochondrial electron transport, cytochrome c to oxygen"/>
    <property type="evidence" value="ECO:0007669"/>
    <property type="project" value="InterPro"/>
</dbReference>
<dbReference type="Gene3D" id="1.10.442.10">
    <property type="entry name" value="Cytochrome c oxidase subunit IV"/>
    <property type="match status" value="1"/>
</dbReference>
<dbReference type="InterPro" id="IPR004203">
    <property type="entry name" value="Cyt_c_oxidase_su4_fam"/>
</dbReference>
<dbReference type="InterPro" id="IPR036639">
    <property type="entry name" value="Cyt_c_oxidase_su4_sf"/>
</dbReference>
<dbReference type="Pfam" id="PF02936">
    <property type="entry name" value="COX4"/>
    <property type="match status" value="1"/>
</dbReference>
<dbReference type="SUPFAM" id="SSF81406">
    <property type="entry name" value="Mitochondrial cytochrome c oxidase subunit IV"/>
    <property type="match status" value="1"/>
</dbReference>
<reference key="1">
    <citation type="journal article" date="2009" name="Nature">
        <title>Evolution of pathogenicity and sexual reproduction in eight Candida genomes.</title>
        <authorList>
            <person name="Butler G."/>
            <person name="Rasmussen M.D."/>
            <person name="Lin M.F."/>
            <person name="Santos M.A.S."/>
            <person name="Sakthikumar S."/>
            <person name="Munro C.A."/>
            <person name="Rheinbay E."/>
            <person name="Grabherr M."/>
            <person name="Forche A."/>
            <person name="Reedy J.L."/>
            <person name="Agrafioti I."/>
            <person name="Arnaud M.B."/>
            <person name="Bates S."/>
            <person name="Brown A.J.P."/>
            <person name="Brunke S."/>
            <person name="Costanzo M.C."/>
            <person name="Fitzpatrick D.A."/>
            <person name="de Groot P.W.J."/>
            <person name="Harris D."/>
            <person name="Hoyer L.L."/>
            <person name="Hube B."/>
            <person name="Klis F.M."/>
            <person name="Kodira C."/>
            <person name="Lennard N."/>
            <person name="Logue M.E."/>
            <person name="Martin R."/>
            <person name="Neiman A.M."/>
            <person name="Nikolaou E."/>
            <person name="Quail M.A."/>
            <person name="Quinn J."/>
            <person name="Santos M.C."/>
            <person name="Schmitzberger F.F."/>
            <person name="Sherlock G."/>
            <person name="Shah P."/>
            <person name="Silverstein K.A.T."/>
            <person name="Skrzypek M.S."/>
            <person name="Soll D."/>
            <person name="Staggs R."/>
            <person name="Stansfield I."/>
            <person name="Stumpf M.P.H."/>
            <person name="Sudbery P.E."/>
            <person name="Srikantha T."/>
            <person name="Zeng Q."/>
            <person name="Berman J."/>
            <person name="Berriman M."/>
            <person name="Heitman J."/>
            <person name="Gow N.A.R."/>
            <person name="Lorenz M.C."/>
            <person name="Birren B.W."/>
            <person name="Kellis M."/>
            <person name="Cuomo C.A."/>
        </authorList>
    </citation>
    <scope>NUCLEOTIDE SEQUENCE [LARGE SCALE GENOMIC DNA]</scope>
    <source>
        <strain>ATCC 42720</strain>
    </source>
</reference>
<accession>C4XVW1</accession>
<proteinExistence type="inferred from homology"/>
<protein>
    <recommendedName>
        <fullName>Genetic interactor of prohibitin 7, mitochondrial</fullName>
    </recommendedName>
</protein>
<gene>
    <name type="primary">GEP7</name>
    <name type="ORF">CLUG_00084</name>
</gene>
<comment type="function">
    <text evidence="1">Involved in respiratory growth and required for cell survival in the absence of prohibitins.</text>
</comment>
<comment type="subcellular location">
    <subcellularLocation>
        <location evidence="1">Mitochondrion membrane</location>
        <topology evidence="1">Single-pass membrane protein</topology>
    </subcellularLocation>
</comment>
<comment type="similarity">
    <text evidence="4">Belongs to the GEP7 family.</text>
</comment>
<sequence>MSLAMLTRNMLRRTSVRAFASSASNFTAGKDSARKLSPEEAKAEAAKLAIQSLKDVGSVFSSGSDDAVQPIDTRPVFENPELFGTLNLLHQGQVLKELQEKYDKNWNKLTDEEKKLGYYIAYGNWGPREKFINWNTQEAPYDLPFRVPSKVRLSNPQANDVVHKLEPLYLSETPVRKEQFDTSKMDPVTKTFIYITLFVMLFAISRDKNTGESGKPQEIIIEDRYMKSKLEKEQKEKEKEIEEENRKNQEKQARRKWYYLWLK</sequence>
<feature type="transit peptide" description="Mitochondrion" evidence="2">
    <location>
        <begin position="1"/>
        <end position="26"/>
    </location>
</feature>
<feature type="chain" id="PRO_0000399738" description="Genetic interactor of prohibitin 7, mitochondrial">
    <location>
        <begin position="27"/>
        <end position="263"/>
    </location>
</feature>
<feature type="transmembrane region" description="Helical" evidence="2">
    <location>
        <begin position="188"/>
        <end position="204"/>
    </location>
</feature>
<feature type="region of interest" description="Disordered" evidence="3">
    <location>
        <begin position="232"/>
        <end position="252"/>
    </location>
</feature>
<organism>
    <name type="scientific">Clavispora lusitaniae (strain ATCC 42720)</name>
    <name type="common">Yeast</name>
    <name type="synonym">Candida lusitaniae</name>
    <dbReference type="NCBI Taxonomy" id="306902"/>
    <lineage>
        <taxon>Eukaryota</taxon>
        <taxon>Fungi</taxon>
        <taxon>Dikarya</taxon>
        <taxon>Ascomycota</taxon>
        <taxon>Saccharomycotina</taxon>
        <taxon>Pichiomycetes</taxon>
        <taxon>Metschnikowiaceae</taxon>
        <taxon>Clavispora</taxon>
    </lineage>
</organism>
<evidence type="ECO:0000250" key="1"/>
<evidence type="ECO:0000255" key="2"/>
<evidence type="ECO:0000256" key="3">
    <source>
        <dbReference type="SAM" id="MobiDB-lite"/>
    </source>
</evidence>
<evidence type="ECO:0000305" key="4"/>